<feature type="chain" id="PRO_0000259164" description="Large ribosomal subunit protein bL31">
    <location>
        <begin position="1"/>
        <end position="74"/>
    </location>
</feature>
<feature type="binding site" evidence="1">
    <location>
        <position position="16"/>
    </location>
    <ligand>
        <name>Zn(2+)</name>
        <dbReference type="ChEBI" id="CHEBI:29105"/>
    </ligand>
</feature>
<feature type="binding site" evidence="1">
    <location>
        <position position="18"/>
    </location>
    <ligand>
        <name>Zn(2+)</name>
        <dbReference type="ChEBI" id="CHEBI:29105"/>
    </ligand>
</feature>
<feature type="binding site" evidence="1">
    <location>
        <position position="37"/>
    </location>
    <ligand>
        <name>Zn(2+)</name>
        <dbReference type="ChEBI" id="CHEBI:29105"/>
    </ligand>
</feature>
<feature type="binding site" evidence="1">
    <location>
        <position position="40"/>
    </location>
    <ligand>
        <name>Zn(2+)</name>
        <dbReference type="ChEBI" id="CHEBI:29105"/>
    </ligand>
</feature>
<proteinExistence type="inferred from homology"/>
<organism>
    <name type="scientific">Koribacter versatilis (strain Ellin345)</name>
    <dbReference type="NCBI Taxonomy" id="204669"/>
    <lineage>
        <taxon>Bacteria</taxon>
        <taxon>Pseudomonadati</taxon>
        <taxon>Acidobacteriota</taxon>
        <taxon>Terriglobia</taxon>
        <taxon>Terriglobales</taxon>
        <taxon>Candidatus Korobacteraceae</taxon>
        <taxon>Candidatus Korobacter</taxon>
    </lineage>
</organism>
<name>RL31_KORVE</name>
<evidence type="ECO:0000255" key="1">
    <source>
        <dbReference type="HAMAP-Rule" id="MF_00501"/>
    </source>
</evidence>
<evidence type="ECO:0000305" key="2"/>
<accession>Q1IVR7</accession>
<dbReference type="EMBL" id="CP000360">
    <property type="protein sequence ID" value="ABF39033.1"/>
    <property type="molecule type" value="Genomic_DNA"/>
</dbReference>
<dbReference type="RefSeq" id="WP_011520835.1">
    <property type="nucleotide sequence ID" value="NC_008009.1"/>
</dbReference>
<dbReference type="SMR" id="Q1IVR7"/>
<dbReference type="STRING" id="204669.Acid345_0028"/>
<dbReference type="EnsemblBacteria" id="ABF39033">
    <property type="protein sequence ID" value="ABF39033"/>
    <property type="gene ID" value="Acid345_0028"/>
</dbReference>
<dbReference type="KEGG" id="aba:Acid345_0028"/>
<dbReference type="eggNOG" id="COG0254">
    <property type="taxonomic scope" value="Bacteria"/>
</dbReference>
<dbReference type="HOGENOM" id="CLU_114306_4_2_0"/>
<dbReference type="OrthoDB" id="9803251at2"/>
<dbReference type="Proteomes" id="UP000002432">
    <property type="component" value="Chromosome"/>
</dbReference>
<dbReference type="GO" id="GO:1990904">
    <property type="term" value="C:ribonucleoprotein complex"/>
    <property type="evidence" value="ECO:0007669"/>
    <property type="project" value="UniProtKB-KW"/>
</dbReference>
<dbReference type="GO" id="GO:0005840">
    <property type="term" value="C:ribosome"/>
    <property type="evidence" value="ECO:0007669"/>
    <property type="project" value="UniProtKB-KW"/>
</dbReference>
<dbReference type="GO" id="GO:0046872">
    <property type="term" value="F:metal ion binding"/>
    <property type="evidence" value="ECO:0007669"/>
    <property type="project" value="UniProtKB-KW"/>
</dbReference>
<dbReference type="GO" id="GO:0019843">
    <property type="term" value="F:rRNA binding"/>
    <property type="evidence" value="ECO:0007669"/>
    <property type="project" value="UniProtKB-KW"/>
</dbReference>
<dbReference type="GO" id="GO:0003735">
    <property type="term" value="F:structural constituent of ribosome"/>
    <property type="evidence" value="ECO:0007669"/>
    <property type="project" value="InterPro"/>
</dbReference>
<dbReference type="GO" id="GO:0006412">
    <property type="term" value="P:translation"/>
    <property type="evidence" value="ECO:0007669"/>
    <property type="project" value="UniProtKB-UniRule"/>
</dbReference>
<dbReference type="Gene3D" id="4.10.830.30">
    <property type="entry name" value="Ribosomal protein L31"/>
    <property type="match status" value="1"/>
</dbReference>
<dbReference type="HAMAP" id="MF_00501">
    <property type="entry name" value="Ribosomal_bL31_1"/>
    <property type="match status" value="1"/>
</dbReference>
<dbReference type="InterPro" id="IPR034704">
    <property type="entry name" value="Ribosomal_bL28/bL31-like_sf"/>
</dbReference>
<dbReference type="InterPro" id="IPR002150">
    <property type="entry name" value="Ribosomal_bL31"/>
</dbReference>
<dbReference type="InterPro" id="IPR027491">
    <property type="entry name" value="Ribosomal_bL31_A"/>
</dbReference>
<dbReference type="InterPro" id="IPR042105">
    <property type="entry name" value="Ribosomal_bL31_sf"/>
</dbReference>
<dbReference type="NCBIfam" id="TIGR00105">
    <property type="entry name" value="L31"/>
    <property type="match status" value="1"/>
</dbReference>
<dbReference type="NCBIfam" id="NF000612">
    <property type="entry name" value="PRK00019.1"/>
    <property type="match status" value="1"/>
</dbReference>
<dbReference type="PANTHER" id="PTHR33280">
    <property type="entry name" value="50S RIBOSOMAL PROTEIN L31, CHLOROPLASTIC"/>
    <property type="match status" value="1"/>
</dbReference>
<dbReference type="PANTHER" id="PTHR33280:SF6">
    <property type="entry name" value="LARGE RIBOSOMAL SUBUNIT PROTEIN BL31A"/>
    <property type="match status" value="1"/>
</dbReference>
<dbReference type="Pfam" id="PF01197">
    <property type="entry name" value="Ribosomal_L31"/>
    <property type="match status" value="1"/>
</dbReference>
<dbReference type="PRINTS" id="PR01249">
    <property type="entry name" value="RIBOSOMALL31"/>
</dbReference>
<dbReference type="SUPFAM" id="SSF143800">
    <property type="entry name" value="L28p-like"/>
    <property type="match status" value="1"/>
</dbReference>
<dbReference type="PROSITE" id="PS01143">
    <property type="entry name" value="RIBOSOMAL_L31"/>
    <property type="match status" value="1"/>
</dbReference>
<keyword id="KW-0479">Metal-binding</keyword>
<keyword id="KW-1185">Reference proteome</keyword>
<keyword id="KW-0687">Ribonucleoprotein</keyword>
<keyword id="KW-0689">Ribosomal protein</keyword>
<keyword id="KW-0694">RNA-binding</keyword>
<keyword id="KW-0699">rRNA-binding</keyword>
<keyword id="KW-0862">Zinc</keyword>
<protein>
    <recommendedName>
        <fullName evidence="1">Large ribosomal subunit protein bL31</fullName>
    </recommendedName>
    <alternativeName>
        <fullName evidence="2">50S ribosomal protein L31</fullName>
    </alternativeName>
</protein>
<sequence>MKTATHPSYDEVRVQCACGNSFATRSTHKGDIHVEICSACHPFFTGKQKLMDTAGRVERFRRKYAKADKQADKQ</sequence>
<reference key="1">
    <citation type="journal article" date="2009" name="Appl. Environ. Microbiol.">
        <title>Three genomes from the phylum Acidobacteria provide insight into the lifestyles of these microorganisms in soils.</title>
        <authorList>
            <person name="Ward N.L."/>
            <person name="Challacombe J.F."/>
            <person name="Janssen P.H."/>
            <person name="Henrissat B."/>
            <person name="Coutinho P.M."/>
            <person name="Wu M."/>
            <person name="Xie G."/>
            <person name="Haft D.H."/>
            <person name="Sait M."/>
            <person name="Badger J."/>
            <person name="Barabote R.D."/>
            <person name="Bradley B."/>
            <person name="Brettin T.S."/>
            <person name="Brinkac L.M."/>
            <person name="Bruce D."/>
            <person name="Creasy T."/>
            <person name="Daugherty S.C."/>
            <person name="Davidsen T.M."/>
            <person name="DeBoy R.T."/>
            <person name="Detter J.C."/>
            <person name="Dodson R.J."/>
            <person name="Durkin A.S."/>
            <person name="Ganapathy A."/>
            <person name="Gwinn-Giglio M."/>
            <person name="Han C.S."/>
            <person name="Khouri H."/>
            <person name="Kiss H."/>
            <person name="Kothari S.P."/>
            <person name="Madupu R."/>
            <person name="Nelson K.E."/>
            <person name="Nelson W.C."/>
            <person name="Paulsen I."/>
            <person name="Penn K."/>
            <person name="Ren Q."/>
            <person name="Rosovitz M.J."/>
            <person name="Selengut J.D."/>
            <person name="Shrivastava S."/>
            <person name="Sullivan S.A."/>
            <person name="Tapia R."/>
            <person name="Thompson L.S."/>
            <person name="Watkins K.L."/>
            <person name="Yang Q."/>
            <person name="Yu C."/>
            <person name="Zafar N."/>
            <person name="Zhou L."/>
            <person name="Kuske C.R."/>
        </authorList>
    </citation>
    <scope>NUCLEOTIDE SEQUENCE [LARGE SCALE GENOMIC DNA]</scope>
    <source>
        <strain>Ellin345</strain>
    </source>
</reference>
<gene>
    <name evidence="1" type="primary">rpmE</name>
    <name type="ordered locus">Acid345_0028</name>
</gene>
<comment type="function">
    <text evidence="1">Binds the 23S rRNA.</text>
</comment>
<comment type="cofactor">
    <cofactor evidence="1">
        <name>Zn(2+)</name>
        <dbReference type="ChEBI" id="CHEBI:29105"/>
    </cofactor>
    <text evidence="1">Binds 1 zinc ion per subunit.</text>
</comment>
<comment type="subunit">
    <text evidence="1">Part of the 50S ribosomal subunit.</text>
</comment>
<comment type="similarity">
    <text evidence="1">Belongs to the bacterial ribosomal protein bL31 family. Type A subfamily.</text>
</comment>